<organism>
    <name type="scientific">Ralstonia pickettii (strain 12J)</name>
    <dbReference type="NCBI Taxonomy" id="402626"/>
    <lineage>
        <taxon>Bacteria</taxon>
        <taxon>Pseudomonadati</taxon>
        <taxon>Pseudomonadota</taxon>
        <taxon>Betaproteobacteria</taxon>
        <taxon>Burkholderiales</taxon>
        <taxon>Burkholderiaceae</taxon>
        <taxon>Ralstonia</taxon>
    </lineage>
</organism>
<comment type="function">
    <text evidence="1">Reversibly catalyzes the transfer of the carbamoyl group from carbamoyl phosphate (CP) to the N(epsilon) atom of ornithine (ORN) to produce L-citrulline.</text>
</comment>
<comment type="catalytic activity">
    <reaction evidence="2">
        <text>carbamoyl phosphate + L-ornithine = L-citrulline + phosphate + H(+)</text>
        <dbReference type="Rhea" id="RHEA:19513"/>
        <dbReference type="ChEBI" id="CHEBI:15378"/>
        <dbReference type="ChEBI" id="CHEBI:43474"/>
        <dbReference type="ChEBI" id="CHEBI:46911"/>
        <dbReference type="ChEBI" id="CHEBI:57743"/>
        <dbReference type="ChEBI" id="CHEBI:58228"/>
        <dbReference type="EC" id="2.1.3.3"/>
    </reaction>
</comment>
<comment type="pathway">
    <text evidence="2">Amino-acid degradation; L-arginine degradation via ADI pathway; carbamoyl phosphate from L-arginine: step 2/2.</text>
</comment>
<comment type="subcellular location">
    <subcellularLocation>
        <location evidence="2">Cytoplasm</location>
    </subcellularLocation>
</comment>
<comment type="similarity">
    <text evidence="2">Belongs to the aspartate/ornithine carbamoyltransferase superfamily. OTCase family.</text>
</comment>
<reference key="1">
    <citation type="submission" date="2008-05" db="EMBL/GenBank/DDBJ databases">
        <title>Complete sequence of chromosome 1 of Ralstonia pickettii 12J.</title>
        <authorList>
            <person name="Lucas S."/>
            <person name="Copeland A."/>
            <person name="Lapidus A."/>
            <person name="Glavina del Rio T."/>
            <person name="Dalin E."/>
            <person name="Tice H."/>
            <person name="Bruce D."/>
            <person name="Goodwin L."/>
            <person name="Pitluck S."/>
            <person name="Meincke L."/>
            <person name="Brettin T."/>
            <person name="Detter J.C."/>
            <person name="Han C."/>
            <person name="Kuske C.R."/>
            <person name="Schmutz J."/>
            <person name="Larimer F."/>
            <person name="Land M."/>
            <person name="Hauser L."/>
            <person name="Kyrpides N."/>
            <person name="Mikhailova N."/>
            <person name="Marsh T."/>
            <person name="Richardson P."/>
        </authorList>
    </citation>
    <scope>NUCLEOTIDE SEQUENCE [LARGE SCALE GENOMIC DNA]</scope>
    <source>
        <strain>12J</strain>
    </source>
</reference>
<protein>
    <recommendedName>
        <fullName evidence="2">Ornithine carbamoyltransferase</fullName>
        <shortName evidence="2">OTCase</shortName>
        <ecNumber evidence="2">2.1.3.3</ecNumber>
    </recommendedName>
</protein>
<proteinExistence type="inferred from homology"/>
<dbReference type="EC" id="2.1.3.3" evidence="2"/>
<dbReference type="EMBL" id="CP001068">
    <property type="protein sequence ID" value="ACD27953.1"/>
    <property type="molecule type" value="Genomic_DNA"/>
</dbReference>
<dbReference type="SMR" id="B2UBA4"/>
<dbReference type="STRING" id="402626.Rpic_2830"/>
<dbReference type="KEGG" id="rpi:Rpic_2830"/>
<dbReference type="PATRIC" id="fig|402626.5.peg.3967"/>
<dbReference type="eggNOG" id="COG0078">
    <property type="taxonomic scope" value="Bacteria"/>
</dbReference>
<dbReference type="HOGENOM" id="CLU_043846_3_2_4"/>
<dbReference type="UniPathway" id="UPA00254">
    <property type="reaction ID" value="UER00365"/>
</dbReference>
<dbReference type="GO" id="GO:0005737">
    <property type="term" value="C:cytoplasm"/>
    <property type="evidence" value="ECO:0007669"/>
    <property type="project" value="UniProtKB-SubCell"/>
</dbReference>
<dbReference type="GO" id="GO:0016597">
    <property type="term" value="F:amino acid binding"/>
    <property type="evidence" value="ECO:0007669"/>
    <property type="project" value="InterPro"/>
</dbReference>
<dbReference type="GO" id="GO:0004585">
    <property type="term" value="F:ornithine carbamoyltransferase activity"/>
    <property type="evidence" value="ECO:0007669"/>
    <property type="project" value="UniProtKB-UniRule"/>
</dbReference>
<dbReference type="GO" id="GO:0042450">
    <property type="term" value="P:arginine biosynthetic process via ornithine"/>
    <property type="evidence" value="ECO:0007669"/>
    <property type="project" value="TreeGrafter"/>
</dbReference>
<dbReference type="GO" id="GO:0019547">
    <property type="term" value="P:arginine catabolic process to ornithine"/>
    <property type="evidence" value="ECO:0007669"/>
    <property type="project" value="UniProtKB-UniPathway"/>
</dbReference>
<dbReference type="GO" id="GO:0019240">
    <property type="term" value="P:citrulline biosynthetic process"/>
    <property type="evidence" value="ECO:0007669"/>
    <property type="project" value="TreeGrafter"/>
</dbReference>
<dbReference type="FunFam" id="3.40.50.1370:FF:000008">
    <property type="entry name" value="Ornithine carbamoyltransferase"/>
    <property type="match status" value="1"/>
</dbReference>
<dbReference type="Gene3D" id="3.40.50.1370">
    <property type="entry name" value="Aspartate/ornithine carbamoyltransferase"/>
    <property type="match status" value="2"/>
</dbReference>
<dbReference type="HAMAP" id="MF_01109">
    <property type="entry name" value="OTCase"/>
    <property type="match status" value="1"/>
</dbReference>
<dbReference type="InterPro" id="IPR006132">
    <property type="entry name" value="Asp/Orn_carbamoyltranf_P-bd"/>
</dbReference>
<dbReference type="InterPro" id="IPR006130">
    <property type="entry name" value="Asp/Orn_carbamoylTrfase"/>
</dbReference>
<dbReference type="InterPro" id="IPR036901">
    <property type="entry name" value="Asp/Orn_carbamoylTrfase_sf"/>
</dbReference>
<dbReference type="InterPro" id="IPR006131">
    <property type="entry name" value="Asp_carbamoyltransf_Asp/Orn-bd"/>
</dbReference>
<dbReference type="InterPro" id="IPR002292">
    <property type="entry name" value="Orn/put_carbamltrans"/>
</dbReference>
<dbReference type="InterPro" id="IPR024904">
    <property type="entry name" value="OTCase_ArgI"/>
</dbReference>
<dbReference type="NCBIfam" id="TIGR00658">
    <property type="entry name" value="orni_carb_tr"/>
    <property type="match status" value="1"/>
</dbReference>
<dbReference type="NCBIfam" id="NF001986">
    <property type="entry name" value="PRK00779.1"/>
    <property type="match status" value="1"/>
</dbReference>
<dbReference type="PANTHER" id="PTHR45753">
    <property type="entry name" value="ORNITHINE CARBAMOYLTRANSFERASE, MITOCHONDRIAL"/>
    <property type="match status" value="1"/>
</dbReference>
<dbReference type="PANTHER" id="PTHR45753:SF3">
    <property type="entry name" value="ORNITHINE TRANSCARBAMYLASE, MITOCHONDRIAL"/>
    <property type="match status" value="1"/>
</dbReference>
<dbReference type="Pfam" id="PF00185">
    <property type="entry name" value="OTCace"/>
    <property type="match status" value="1"/>
</dbReference>
<dbReference type="Pfam" id="PF02729">
    <property type="entry name" value="OTCace_N"/>
    <property type="match status" value="1"/>
</dbReference>
<dbReference type="PRINTS" id="PR00100">
    <property type="entry name" value="AOTCASE"/>
</dbReference>
<dbReference type="PRINTS" id="PR00102">
    <property type="entry name" value="OTCASE"/>
</dbReference>
<dbReference type="SUPFAM" id="SSF53671">
    <property type="entry name" value="Aspartate/ornithine carbamoyltransferase"/>
    <property type="match status" value="1"/>
</dbReference>
<dbReference type="PROSITE" id="PS00097">
    <property type="entry name" value="CARBAMOYLTRANSFERASE"/>
    <property type="match status" value="1"/>
</dbReference>
<accession>B2UBA4</accession>
<sequence>MNPPSSIKHYLQFKDFSLEEYEYLLDRSAILKAKFKNYETWHPLHDRTLAMIFEKNSTRTRLSFEAGIHQLGGHAVFLNTRDSQLGRGEPIEDAAQVISRMTDIIMIRTFGQEIIERFAAHSRVPVINGLTNEYHPCQVLADIFTFIEQRGPIKGKTVTWVGDANNMAYTWVQAAEILGFRFHFSAPKGYQLDPAMVADSALPFVHVFENPLEACDGAHLVTTDVWTSMGYEAENEARKKAFGDWMVTEAMMQRAQPDALFMHCLPAHRGEEVEAAVIDGKQSVVWDEAENRLHVQKALMEYLLCGRY</sequence>
<evidence type="ECO:0000250" key="1"/>
<evidence type="ECO:0000255" key="2">
    <source>
        <dbReference type="HAMAP-Rule" id="MF_01109"/>
    </source>
</evidence>
<name>OTC_RALPJ</name>
<gene>
    <name evidence="2" type="primary">arcB</name>
    <name type="ordered locus">Rpic_2830</name>
</gene>
<feature type="chain" id="PRO_1000137101" description="Ornithine carbamoyltransferase">
    <location>
        <begin position="1"/>
        <end position="308"/>
    </location>
</feature>
<feature type="binding site" evidence="2">
    <location>
        <begin position="57"/>
        <end position="60"/>
    </location>
    <ligand>
        <name>carbamoyl phosphate</name>
        <dbReference type="ChEBI" id="CHEBI:58228"/>
    </ligand>
</feature>
<feature type="binding site" evidence="2">
    <location>
        <position position="84"/>
    </location>
    <ligand>
        <name>carbamoyl phosphate</name>
        <dbReference type="ChEBI" id="CHEBI:58228"/>
    </ligand>
</feature>
<feature type="binding site" evidence="2">
    <location>
        <position position="108"/>
    </location>
    <ligand>
        <name>carbamoyl phosphate</name>
        <dbReference type="ChEBI" id="CHEBI:58228"/>
    </ligand>
</feature>
<feature type="binding site" evidence="2">
    <location>
        <begin position="135"/>
        <end position="138"/>
    </location>
    <ligand>
        <name>carbamoyl phosphate</name>
        <dbReference type="ChEBI" id="CHEBI:58228"/>
    </ligand>
</feature>
<feature type="binding site" evidence="2">
    <location>
        <position position="166"/>
    </location>
    <ligand>
        <name>L-ornithine</name>
        <dbReference type="ChEBI" id="CHEBI:46911"/>
    </ligand>
</feature>
<feature type="binding site" evidence="2">
    <location>
        <position position="224"/>
    </location>
    <ligand>
        <name>L-ornithine</name>
        <dbReference type="ChEBI" id="CHEBI:46911"/>
    </ligand>
</feature>
<feature type="binding site" evidence="2">
    <location>
        <begin position="228"/>
        <end position="229"/>
    </location>
    <ligand>
        <name>L-ornithine</name>
        <dbReference type="ChEBI" id="CHEBI:46911"/>
    </ligand>
</feature>
<feature type="binding site" evidence="2">
    <location>
        <begin position="264"/>
        <end position="265"/>
    </location>
    <ligand>
        <name>carbamoyl phosphate</name>
        <dbReference type="ChEBI" id="CHEBI:58228"/>
    </ligand>
</feature>
<feature type="binding site" evidence="2">
    <location>
        <position position="292"/>
    </location>
    <ligand>
        <name>carbamoyl phosphate</name>
        <dbReference type="ChEBI" id="CHEBI:58228"/>
    </ligand>
</feature>
<keyword id="KW-0056">Arginine metabolism</keyword>
<keyword id="KW-0963">Cytoplasm</keyword>
<keyword id="KW-0808">Transferase</keyword>